<organism>
    <name type="scientific">Ehrlichia chaffeensis (strain ATCC CRL-10679 / Arkansas)</name>
    <dbReference type="NCBI Taxonomy" id="205920"/>
    <lineage>
        <taxon>Bacteria</taxon>
        <taxon>Pseudomonadati</taxon>
        <taxon>Pseudomonadota</taxon>
        <taxon>Alphaproteobacteria</taxon>
        <taxon>Rickettsiales</taxon>
        <taxon>Anaplasmataceae</taxon>
        <taxon>Ehrlichia</taxon>
    </lineage>
</organism>
<sequence length="108" mass="12094">MVTQKIYIELKAFDSCLLDRSARSIILTAKRSGARVNGPIFFPRKIMKFIVNRSTHVDKKSREQFEIRTHKRLISLPKANSTIIQALMSLQLPAGVDVKVKVIGGSNG</sequence>
<feature type="chain" id="PRO_0000237041" description="Small ribosomal subunit protein uS10">
    <location>
        <begin position="1"/>
        <end position="108"/>
    </location>
</feature>
<name>RS10_EHRCR</name>
<accession>Q2GH57</accession>
<reference key="1">
    <citation type="journal article" date="2006" name="PLoS Genet.">
        <title>Comparative genomics of emerging human ehrlichiosis agents.</title>
        <authorList>
            <person name="Dunning Hotopp J.C."/>
            <person name="Lin M."/>
            <person name="Madupu R."/>
            <person name="Crabtree J."/>
            <person name="Angiuoli S.V."/>
            <person name="Eisen J.A."/>
            <person name="Seshadri R."/>
            <person name="Ren Q."/>
            <person name="Wu M."/>
            <person name="Utterback T.R."/>
            <person name="Smith S."/>
            <person name="Lewis M."/>
            <person name="Khouri H."/>
            <person name="Zhang C."/>
            <person name="Niu H."/>
            <person name="Lin Q."/>
            <person name="Ohashi N."/>
            <person name="Zhi N."/>
            <person name="Nelson W.C."/>
            <person name="Brinkac L.M."/>
            <person name="Dodson R.J."/>
            <person name="Rosovitz M.J."/>
            <person name="Sundaram J.P."/>
            <person name="Daugherty S.C."/>
            <person name="Davidsen T."/>
            <person name="Durkin A.S."/>
            <person name="Gwinn M.L."/>
            <person name="Haft D.H."/>
            <person name="Selengut J.D."/>
            <person name="Sullivan S.A."/>
            <person name="Zafar N."/>
            <person name="Zhou L."/>
            <person name="Benahmed F."/>
            <person name="Forberger H."/>
            <person name="Halpin R."/>
            <person name="Mulligan S."/>
            <person name="Robinson J."/>
            <person name="White O."/>
            <person name="Rikihisa Y."/>
            <person name="Tettelin H."/>
        </authorList>
    </citation>
    <scope>NUCLEOTIDE SEQUENCE [LARGE SCALE GENOMIC DNA]</scope>
    <source>
        <strain>ATCC CRL-10679 / Arkansas</strain>
    </source>
</reference>
<proteinExistence type="inferred from homology"/>
<gene>
    <name evidence="1" type="primary">rpsJ</name>
    <name type="ordered locus">ECH_0408</name>
</gene>
<evidence type="ECO:0000255" key="1">
    <source>
        <dbReference type="HAMAP-Rule" id="MF_00508"/>
    </source>
</evidence>
<evidence type="ECO:0000305" key="2"/>
<comment type="function">
    <text evidence="1">Involved in the binding of tRNA to the ribosomes.</text>
</comment>
<comment type="subunit">
    <text evidence="1">Part of the 30S ribosomal subunit.</text>
</comment>
<comment type="similarity">
    <text evidence="1">Belongs to the universal ribosomal protein uS10 family.</text>
</comment>
<dbReference type="EMBL" id="CP000236">
    <property type="protein sequence ID" value="ABD44817.1"/>
    <property type="molecule type" value="Genomic_DNA"/>
</dbReference>
<dbReference type="RefSeq" id="WP_011452575.1">
    <property type="nucleotide sequence ID" value="NC_007799.1"/>
</dbReference>
<dbReference type="SMR" id="Q2GH57"/>
<dbReference type="STRING" id="205920.ECH_0408"/>
<dbReference type="KEGG" id="ech:ECH_0408"/>
<dbReference type="eggNOG" id="COG0051">
    <property type="taxonomic scope" value="Bacteria"/>
</dbReference>
<dbReference type="HOGENOM" id="CLU_122625_1_3_5"/>
<dbReference type="OrthoDB" id="9804464at2"/>
<dbReference type="Proteomes" id="UP000008320">
    <property type="component" value="Chromosome"/>
</dbReference>
<dbReference type="GO" id="GO:1990904">
    <property type="term" value="C:ribonucleoprotein complex"/>
    <property type="evidence" value="ECO:0007669"/>
    <property type="project" value="UniProtKB-KW"/>
</dbReference>
<dbReference type="GO" id="GO:0005840">
    <property type="term" value="C:ribosome"/>
    <property type="evidence" value="ECO:0007669"/>
    <property type="project" value="UniProtKB-KW"/>
</dbReference>
<dbReference type="GO" id="GO:0003735">
    <property type="term" value="F:structural constituent of ribosome"/>
    <property type="evidence" value="ECO:0007669"/>
    <property type="project" value="InterPro"/>
</dbReference>
<dbReference type="GO" id="GO:0000049">
    <property type="term" value="F:tRNA binding"/>
    <property type="evidence" value="ECO:0007669"/>
    <property type="project" value="UniProtKB-UniRule"/>
</dbReference>
<dbReference type="GO" id="GO:0006412">
    <property type="term" value="P:translation"/>
    <property type="evidence" value="ECO:0007669"/>
    <property type="project" value="UniProtKB-UniRule"/>
</dbReference>
<dbReference type="FunFam" id="3.30.70.600:FF:000003">
    <property type="entry name" value="30S ribosomal protein S10"/>
    <property type="match status" value="1"/>
</dbReference>
<dbReference type="Gene3D" id="3.30.70.600">
    <property type="entry name" value="Ribosomal protein S10 domain"/>
    <property type="match status" value="1"/>
</dbReference>
<dbReference type="HAMAP" id="MF_00508">
    <property type="entry name" value="Ribosomal_uS10"/>
    <property type="match status" value="1"/>
</dbReference>
<dbReference type="InterPro" id="IPR001848">
    <property type="entry name" value="Ribosomal_uS10"/>
</dbReference>
<dbReference type="InterPro" id="IPR027486">
    <property type="entry name" value="Ribosomal_uS10_dom"/>
</dbReference>
<dbReference type="InterPro" id="IPR036838">
    <property type="entry name" value="Ribosomal_uS10_dom_sf"/>
</dbReference>
<dbReference type="NCBIfam" id="NF001861">
    <property type="entry name" value="PRK00596.1"/>
    <property type="match status" value="1"/>
</dbReference>
<dbReference type="NCBIfam" id="TIGR01049">
    <property type="entry name" value="rpsJ_bact"/>
    <property type="match status" value="1"/>
</dbReference>
<dbReference type="PANTHER" id="PTHR11700">
    <property type="entry name" value="30S RIBOSOMAL PROTEIN S10 FAMILY MEMBER"/>
    <property type="match status" value="1"/>
</dbReference>
<dbReference type="Pfam" id="PF00338">
    <property type="entry name" value="Ribosomal_S10"/>
    <property type="match status" value="1"/>
</dbReference>
<dbReference type="PRINTS" id="PR00971">
    <property type="entry name" value="RIBOSOMALS10"/>
</dbReference>
<dbReference type="SMART" id="SM01403">
    <property type="entry name" value="Ribosomal_S10"/>
    <property type="match status" value="1"/>
</dbReference>
<dbReference type="SUPFAM" id="SSF54999">
    <property type="entry name" value="Ribosomal protein S10"/>
    <property type="match status" value="1"/>
</dbReference>
<protein>
    <recommendedName>
        <fullName evidence="1">Small ribosomal subunit protein uS10</fullName>
    </recommendedName>
    <alternativeName>
        <fullName evidence="2">30S ribosomal protein S10</fullName>
    </alternativeName>
</protein>
<keyword id="KW-1185">Reference proteome</keyword>
<keyword id="KW-0687">Ribonucleoprotein</keyword>
<keyword id="KW-0689">Ribosomal protein</keyword>